<proteinExistence type="evidence at transcript level"/>
<keyword id="KW-0433">Leucine-rich repeat</keyword>
<keyword id="KW-1185">Reference proteome</keyword>
<keyword id="KW-0677">Repeat</keyword>
<gene>
    <name type="primary">Lrrc71</name>
</gene>
<comment type="sequence caution" evidence="2">
    <conflict type="erroneous termination">
        <sequence resource="EMBL-CDS" id="BAC26688"/>
    </conflict>
    <text>Truncated C-terminus.</text>
</comment>
<organism>
    <name type="scientific">Mus musculus</name>
    <name type="common">Mouse</name>
    <dbReference type="NCBI Taxonomy" id="10090"/>
    <lineage>
        <taxon>Eukaryota</taxon>
        <taxon>Metazoa</taxon>
        <taxon>Chordata</taxon>
        <taxon>Craniata</taxon>
        <taxon>Vertebrata</taxon>
        <taxon>Euteleostomi</taxon>
        <taxon>Mammalia</taxon>
        <taxon>Eutheria</taxon>
        <taxon>Euarchontoglires</taxon>
        <taxon>Glires</taxon>
        <taxon>Rodentia</taxon>
        <taxon>Myomorpha</taxon>
        <taxon>Muroidea</taxon>
        <taxon>Muridae</taxon>
        <taxon>Murinae</taxon>
        <taxon>Mus</taxon>
        <taxon>Mus</taxon>
    </lineage>
</organism>
<sequence length="558" mass="61351">MSSEPSTTGTSPRTPRPGAQKSSGAVTKKGDRAAKDKTASTLPPVGEDEPKNPEEYQCTGVLETDFAELCTRSGYVDFPKVVTRPRVQQSSVPSASTSEKPVLDDQRPSASCSQSSLESKYVFFRPTIQVELEQEDSKAVKEIYIRGWKVEDRILGIFSKCLPSLSQLQAINLWKVGLTDKTLTTFIALLPLCSSTLRKVSLEGNPIPEQSFSKLMGLDSTIVHLSLRNNNINDHGAQLLGQALSTLQNSNRTLVSLNLAFNHIGDVGAGYIADGLRLNRSLLWLSLAHNHIQDKGALKLAEVLRPFELTHREVVERRRLLLVKGTQERSRSPSSSRYGDSKAEREKSQTLGISNVTLVDKQEKMQSLKAPKTISKKKEKTGEVVKKEEKLGSGQSPTQGTPKKEDAAKAGKGKVTIPEQKMSKGKATKMGAKEKRSILLESEQLVVEATEMVNPLLEPVEHRDGKVFLPGNKVLLHLNLLRNQITEVGLEGFLTAVQYQVQVSKPKTSPKAPLGLLWLSLAKNCFDPQCPTHVMIQELMLPRDPVKAKAREEEAAAT</sequence>
<accession>Q9D3W5</accession>
<accession>Q8C0S9</accession>
<protein>
    <recommendedName>
        <fullName>Leucine-rich repeat-containing protein 71</fullName>
    </recommendedName>
</protein>
<evidence type="ECO:0000256" key="1">
    <source>
        <dbReference type="SAM" id="MobiDB-lite"/>
    </source>
</evidence>
<evidence type="ECO:0000305" key="2"/>
<feature type="chain" id="PRO_0000284543" description="Leucine-rich repeat-containing protein 71">
    <location>
        <begin position="1"/>
        <end position="558"/>
    </location>
</feature>
<feature type="repeat" description="LRR 1">
    <location>
        <begin position="196"/>
        <end position="216"/>
    </location>
</feature>
<feature type="repeat" description="LRR 2">
    <location>
        <begin position="221"/>
        <end position="241"/>
    </location>
</feature>
<feature type="repeat" description="LRR 3">
    <location>
        <begin position="253"/>
        <end position="274"/>
    </location>
</feature>
<feature type="repeat" description="LRR 4">
    <location>
        <begin position="281"/>
        <end position="302"/>
    </location>
</feature>
<feature type="region of interest" description="Disordered" evidence="1">
    <location>
        <begin position="1"/>
        <end position="55"/>
    </location>
</feature>
<feature type="region of interest" description="Disordered" evidence="1">
    <location>
        <begin position="86"/>
        <end position="112"/>
    </location>
</feature>
<feature type="region of interest" description="Disordered" evidence="1">
    <location>
        <begin position="325"/>
        <end position="415"/>
    </location>
</feature>
<feature type="compositionally biased region" description="Low complexity" evidence="1">
    <location>
        <begin position="1"/>
        <end position="18"/>
    </location>
</feature>
<feature type="compositionally biased region" description="Basic and acidic residues" evidence="1">
    <location>
        <begin position="28"/>
        <end position="38"/>
    </location>
</feature>
<feature type="compositionally biased region" description="Polar residues" evidence="1">
    <location>
        <begin position="86"/>
        <end position="99"/>
    </location>
</feature>
<feature type="compositionally biased region" description="Basic and acidic residues" evidence="1">
    <location>
        <begin position="339"/>
        <end position="348"/>
    </location>
</feature>
<feature type="compositionally biased region" description="Basic and acidic residues" evidence="1">
    <location>
        <begin position="380"/>
        <end position="391"/>
    </location>
</feature>
<name>LRC71_MOUSE</name>
<dbReference type="EMBL" id="AK016993">
    <property type="protein sequence ID" value="BAB30543.1"/>
    <property type="molecule type" value="mRNA"/>
</dbReference>
<dbReference type="EMBL" id="AK029938">
    <property type="protein sequence ID" value="BAC26688.1"/>
    <property type="status" value="ALT_SEQ"/>
    <property type="molecule type" value="mRNA"/>
</dbReference>
<dbReference type="CCDS" id="CCDS50946.1"/>
<dbReference type="RefSeq" id="NP_083247.1">
    <property type="nucleotide sequence ID" value="NM_028971.1"/>
</dbReference>
<dbReference type="SMR" id="Q9D3W5"/>
<dbReference type="BioGRID" id="216790">
    <property type="interactions" value="1"/>
</dbReference>
<dbReference type="FunCoup" id="Q9D3W5">
    <property type="interactions" value="8"/>
</dbReference>
<dbReference type="STRING" id="10090.ENSMUSP00000023846"/>
<dbReference type="iPTMnet" id="Q9D3W5"/>
<dbReference type="PhosphoSitePlus" id="Q9D3W5"/>
<dbReference type="PaxDb" id="10090-ENSMUSP00000023846"/>
<dbReference type="ProteomicsDB" id="252512"/>
<dbReference type="Antibodypedia" id="34229">
    <property type="antibodies" value="30 antibodies from 15 providers"/>
</dbReference>
<dbReference type="Ensembl" id="ENSMUST00000023846.11">
    <property type="protein sequence ID" value="ENSMUSP00000023846.5"/>
    <property type="gene ID" value="ENSMUSG00000023084.12"/>
</dbReference>
<dbReference type="GeneID" id="74485"/>
<dbReference type="KEGG" id="mmu:74485"/>
<dbReference type="UCSC" id="uc008psp.2">
    <property type="organism name" value="mouse"/>
</dbReference>
<dbReference type="AGR" id="MGI:1921735"/>
<dbReference type="CTD" id="149499"/>
<dbReference type="MGI" id="MGI:1921735">
    <property type="gene designation" value="Lrrc71"/>
</dbReference>
<dbReference type="VEuPathDB" id="HostDB:ENSMUSG00000023084"/>
<dbReference type="eggNOG" id="KOG4308">
    <property type="taxonomic scope" value="Eukaryota"/>
</dbReference>
<dbReference type="GeneTree" id="ENSGT00440000034367"/>
<dbReference type="HOGENOM" id="CLU_035960_0_0_1"/>
<dbReference type="InParanoid" id="Q9D3W5"/>
<dbReference type="OMA" id="VQYQVQF"/>
<dbReference type="OrthoDB" id="120976at2759"/>
<dbReference type="PhylomeDB" id="Q9D3W5"/>
<dbReference type="TreeFam" id="TF329605"/>
<dbReference type="BioGRID-ORCS" id="74485">
    <property type="hits" value="4 hits in 76 CRISPR screens"/>
</dbReference>
<dbReference type="PRO" id="PR:Q9D3W5"/>
<dbReference type="Proteomes" id="UP000000589">
    <property type="component" value="Chromosome 3"/>
</dbReference>
<dbReference type="RNAct" id="Q9D3W5">
    <property type="molecule type" value="protein"/>
</dbReference>
<dbReference type="Bgee" id="ENSMUSG00000023084">
    <property type="expression patterns" value="Expressed in spermatocyte and 49 other cell types or tissues"/>
</dbReference>
<dbReference type="ExpressionAtlas" id="Q9D3W5">
    <property type="expression patterns" value="baseline and differential"/>
</dbReference>
<dbReference type="Gene3D" id="3.80.10.10">
    <property type="entry name" value="Ribonuclease Inhibitor"/>
    <property type="match status" value="1"/>
</dbReference>
<dbReference type="InterPro" id="IPR001611">
    <property type="entry name" value="Leu-rich_rpt"/>
</dbReference>
<dbReference type="InterPro" id="IPR053040">
    <property type="entry name" value="LRR-containing_protein_71"/>
</dbReference>
<dbReference type="InterPro" id="IPR032675">
    <property type="entry name" value="LRR_dom_sf"/>
</dbReference>
<dbReference type="PANTHER" id="PTHR46984">
    <property type="entry name" value="LEUCINE-RICH REPEAT-CONTAINING PROTEIN 71"/>
    <property type="match status" value="1"/>
</dbReference>
<dbReference type="PANTHER" id="PTHR46984:SF1">
    <property type="entry name" value="LEUCINE-RICH REPEAT-CONTAINING PROTEIN 71"/>
    <property type="match status" value="1"/>
</dbReference>
<dbReference type="Pfam" id="PF13516">
    <property type="entry name" value="LRR_6"/>
    <property type="match status" value="3"/>
</dbReference>
<dbReference type="SMART" id="SM00368">
    <property type="entry name" value="LRR_RI"/>
    <property type="match status" value="4"/>
</dbReference>
<dbReference type="SUPFAM" id="SSF52047">
    <property type="entry name" value="RNI-like"/>
    <property type="match status" value="1"/>
</dbReference>
<reference key="1">
    <citation type="journal article" date="2005" name="Science">
        <title>The transcriptional landscape of the mammalian genome.</title>
        <authorList>
            <person name="Carninci P."/>
            <person name="Kasukawa T."/>
            <person name="Katayama S."/>
            <person name="Gough J."/>
            <person name="Frith M.C."/>
            <person name="Maeda N."/>
            <person name="Oyama R."/>
            <person name="Ravasi T."/>
            <person name="Lenhard B."/>
            <person name="Wells C."/>
            <person name="Kodzius R."/>
            <person name="Shimokawa K."/>
            <person name="Bajic V.B."/>
            <person name="Brenner S.E."/>
            <person name="Batalov S."/>
            <person name="Forrest A.R."/>
            <person name="Zavolan M."/>
            <person name="Davis M.J."/>
            <person name="Wilming L.G."/>
            <person name="Aidinis V."/>
            <person name="Allen J.E."/>
            <person name="Ambesi-Impiombato A."/>
            <person name="Apweiler R."/>
            <person name="Aturaliya R.N."/>
            <person name="Bailey T.L."/>
            <person name="Bansal M."/>
            <person name="Baxter L."/>
            <person name="Beisel K.W."/>
            <person name="Bersano T."/>
            <person name="Bono H."/>
            <person name="Chalk A.M."/>
            <person name="Chiu K.P."/>
            <person name="Choudhary V."/>
            <person name="Christoffels A."/>
            <person name="Clutterbuck D.R."/>
            <person name="Crowe M.L."/>
            <person name="Dalla E."/>
            <person name="Dalrymple B.P."/>
            <person name="de Bono B."/>
            <person name="Della Gatta G."/>
            <person name="di Bernardo D."/>
            <person name="Down T."/>
            <person name="Engstrom P."/>
            <person name="Fagiolini M."/>
            <person name="Faulkner G."/>
            <person name="Fletcher C.F."/>
            <person name="Fukushima T."/>
            <person name="Furuno M."/>
            <person name="Futaki S."/>
            <person name="Gariboldi M."/>
            <person name="Georgii-Hemming P."/>
            <person name="Gingeras T.R."/>
            <person name="Gojobori T."/>
            <person name="Green R.E."/>
            <person name="Gustincich S."/>
            <person name="Harbers M."/>
            <person name="Hayashi Y."/>
            <person name="Hensch T.K."/>
            <person name="Hirokawa N."/>
            <person name="Hill D."/>
            <person name="Huminiecki L."/>
            <person name="Iacono M."/>
            <person name="Ikeo K."/>
            <person name="Iwama A."/>
            <person name="Ishikawa T."/>
            <person name="Jakt M."/>
            <person name="Kanapin A."/>
            <person name="Katoh M."/>
            <person name="Kawasawa Y."/>
            <person name="Kelso J."/>
            <person name="Kitamura H."/>
            <person name="Kitano H."/>
            <person name="Kollias G."/>
            <person name="Krishnan S.P."/>
            <person name="Kruger A."/>
            <person name="Kummerfeld S.K."/>
            <person name="Kurochkin I.V."/>
            <person name="Lareau L.F."/>
            <person name="Lazarevic D."/>
            <person name="Lipovich L."/>
            <person name="Liu J."/>
            <person name="Liuni S."/>
            <person name="McWilliam S."/>
            <person name="Madan Babu M."/>
            <person name="Madera M."/>
            <person name="Marchionni L."/>
            <person name="Matsuda H."/>
            <person name="Matsuzawa S."/>
            <person name="Miki H."/>
            <person name="Mignone F."/>
            <person name="Miyake S."/>
            <person name="Morris K."/>
            <person name="Mottagui-Tabar S."/>
            <person name="Mulder N."/>
            <person name="Nakano N."/>
            <person name="Nakauchi H."/>
            <person name="Ng P."/>
            <person name="Nilsson R."/>
            <person name="Nishiguchi S."/>
            <person name="Nishikawa S."/>
            <person name="Nori F."/>
            <person name="Ohara O."/>
            <person name="Okazaki Y."/>
            <person name="Orlando V."/>
            <person name="Pang K.C."/>
            <person name="Pavan W.J."/>
            <person name="Pavesi G."/>
            <person name="Pesole G."/>
            <person name="Petrovsky N."/>
            <person name="Piazza S."/>
            <person name="Reed J."/>
            <person name="Reid J.F."/>
            <person name="Ring B.Z."/>
            <person name="Ringwald M."/>
            <person name="Rost B."/>
            <person name="Ruan Y."/>
            <person name="Salzberg S.L."/>
            <person name="Sandelin A."/>
            <person name="Schneider C."/>
            <person name="Schoenbach C."/>
            <person name="Sekiguchi K."/>
            <person name="Semple C.A."/>
            <person name="Seno S."/>
            <person name="Sessa L."/>
            <person name="Sheng Y."/>
            <person name="Shibata Y."/>
            <person name="Shimada H."/>
            <person name="Shimada K."/>
            <person name="Silva D."/>
            <person name="Sinclair B."/>
            <person name="Sperling S."/>
            <person name="Stupka E."/>
            <person name="Sugiura K."/>
            <person name="Sultana R."/>
            <person name="Takenaka Y."/>
            <person name="Taki K."/>
            <person name="Tammoja K."/>
            <person name="Tan S.L."/>
            <person name="Tang S."/>
            <person name="Taylor M.S."/>
            <person name="Tegner J."/>
            <person name="Teichmann S.A."/>
            <person name="Ueda H.R."/>
            <person name="van Nimwegen E."/>
            <person name="Verardo R."/>
            <person name="Wei C.L."/>
            <person name="Yagi K."/>
            <person name="Yamanishi H."/>
            <person name="Zabarovsky E."/>
            <person name="Zhu S."/>
            <person name="Zimmer A."/>
            <person name="Hide W."/>
            <person name="Bult C."/>
            <person name="Grimmond S.M."/>
            <person name="Teasdale R.D."/>
            <person name="Liu E.T."/>
            <person name="Brusic V."/>
            <person name="Quackenbush J."/>
            <person name="Wahlestedt C."/>
            <person name="Mattick J.S."/>
            <person name="Hume D.A."/>
            <person name="Kai C."/>
            <person name="Sasaki D."/>
            <person name="Tomaru Y."/>
            <person name="Fukuda S."/>
            <person name="Kanamori-Katayama M."/>
            <person name="Suzuki M."/>
            <person name="Aoki J."/>
            <person name="Arakawa T."/>
            <person name="Iida J."/>
            <person name="Imamura K."/>
            <person name="Itoh M."/>
            <person name="Kato T."/>
            <person name="Kawaji H."/>
            <person name="Kawagashira N."/>
            <person name="Kawashima T."/>
            <person name="Kojima M."/>
            <person name="Kondo S."/>
            <person name="Konno H."/>
            <person name="Nakano K."/>
            <person name="Ninomiya N."/>
            <person name="Nishio T."/>
            <person name="Okada M."/>
            <person name="Plessy C."/>
            <person name="Shibata K."/>
            <person name="Shiraki T."/>
            <person name="Suzuki S."/>
            <person name="Tagami M."/>
            <person name="Waki K."/>
            <person name="Watahiki A."/>
            <person name="Okamura-Oho Y."/>
            <person name="Suzuki H."/>
            <person name="Kawai J."/>
            <person name="Hayashizaki Y."/>
        </authorList>
    </citation>
    <scope>NUCLEOTIDE SEQUENCE [LARGE SCALE MRNA]</scope>
    <source>
        <strain>C57BL/6J</strain>
        <tissue>Testis</tissue>
    </source>
</reference>